<protein>
    <recommendedName>
        <fullName>DNA polymerase catalytic subunit</fullName>
        <ecNumber>2.7.7.7</ecNumber>
        <ecNumber>3.1.26.4</ecNumber>
    </recommendedName>
</protein>
<keyword id="KW-0235">DNA replication</keyword>
<keyword id="KW-0238">DNA-binding</keyword>
<keyword id="KW-0239">DNA-directed DNA polymerase</keyword>
<keyword id="KW-0255">Endonuclease</keyword>
<keyword id="KW-1048">Host nucleus</keyword>
<keyword id="KW-0378">Hydrolase</keyword>
<keyword id="KW-0511">Multifunctional enzyme</keyword>
<keyword id="KW-0540">Nuclease</keyword>
<keyword id="KW-0548">Nucleotidyltransferase</keyword>
<keyword id="KW-1185">Reference proteome</keyword>
<keyword id="KW-0808">Transferase</keyword>
<keyword id="KW-1194">Viral DNA replication</keyword>
<gene>
    <name type="ORF">UL30</name>
</gene>
<organism>
    <name type="scientific">Human herpesvirus 2 (strain HG52)</name>
    <name type="common">HHV-2</name>
    <name type="synonym">Human herpes simplex virus 2</name>
    <dbReference type="NCBI Taxonomy" id="10315"/>
    <lineage>
        <taxon>Viruses</taxon>
        <taxon>Duplodnaviria</taxon>
        <taxon>Heunggongvirae</taxon>
        <taxon>Peploviricota</taxon>
        <taxon>Herviviricetes</taxon>
        <taxon>Herpesvirales</taxon>
        <taxon>Orthoherpesviridae</taxon>
        <taxon>Alphaherpesvirinae</taxon>
        <taxon>Simplexvirus</taxon>
        <taxon>Simplexvirus humanalpha2</taxon>
        <taxon>Human herpesvirus 2</taxon>
    </lineage>
</organism>
<name>DPOL_HHV2H</name>
<organismHost>
    <name type="scientific">Homo sapiens</name>
    <name type="common">Human</name>
    <dbReference type="NCBI Taxonomy" id="9606"/>
</organismHost>
<proteinExistence type="inferred from homology"/>
<dbReference type="EC" id="2.7.7.7"/>
<dbReference type="EC" id="3.1.26.4"/>
<dbReference type="EMBL" id="Z86099">
    <property type="protein sequence ID" value="CAB06755.1"/>
    <property type="molecule type" value="Genomic_DNA"/>
</dbReference>
<dbReference type="RefSeq" id="YP_009137182.1">
    <property type="nucleotide sequence ID" value="NC_001798.2"/>
</dbReference>
<dbReference type="SMR" id="P89453"/>
<dbReference type="GeneID" id="1487316"/>
<dbReference type="KEGG" id="vg:1487316"/>
<dbReference type="Proteomes" id="UP000001874">
    <property type="component" value="Segment"/>
</dbReference>
<dbReference type="GO" id="GO:0042025">
    <property type="term" value="C:host cell nucleus"/>
    <property type="evidence" value="ECO:0007669"/>
    <property type="project" value="UniProtKB-SubCell"/>
</dbReference>
<dbReference type="GO" id="GO:0003677">
    <property type="term" value="F:DNA binding"/>
    <property type="evidence" value="ECO:0007669"/>
    <property type="project" value="UniProtKB-KW"/>
</dbReference>
<dbReference type="GO" id="GO:0003887">
    <property type="term" value="F:DNA-directed DNA polymerase activity"/>
    <property type="evidence" value="ECO:0007669"/>
    <property type="project" value="UniProtKB-KW"/>
</dbReference>
<dbReference type="GO" id="GO:0000166">
    <property type="term" value="F:nucleotide binding"/>
    <property type="evidence" value="ECO:0007669"/>
    <property type="project" value="InterPro"/>
</dbReference>
<dbReference type="GO" id="GO:0004523">
    <property type="term" value="F:RNA-DNA hybrid ribonuclease activity"/>
    <property type="evidence" value="ECO:0007669"/>
    <property type="project" value="UniProtKB-EC"/>
</dbReference>
<dbReference type="GO" id="GO:0006261">
    <property type="term" value="P:DNA-templated DNA replication"/>
    <property type="evidence" value="ECO:0007669"/>
    <property type="project" value="TreeGrafter"/>
</dbReference>
<dbReference type="GO" id="GO:0039693">
    <property type="term" value="P:viral DNA genome replication"/>
    <property type="evidence" value="ECO:0007669"/>
    <property type="project" value="UniProtKB-KW"/>
</dbReference>
<dbReference type="FunFam" id="1.10.287.690:FF:000006">
    <property type="entry name" value="DNA polymerase"/>
    <property type="match status" value="1"/>
</dbReference>
<dbReference type="FunFam" id="3.30.342.10:FF:000013">
    <property type="entry name" value="DNA polymerase"/>
    <property type="match status" value="1"/>
</dbReference>
<dbReference type="FunFam" id="3.30.420.10:FF:000004">
    <property type="entry name" value="DNA polymerase"/>
    <property type="match status" value="1"/>
</dbReference>
<dbReference type="FunFam" id="1.10.132.60:FF:000011">
    <property type="entry name" value="DNA polymerase catalytic subunit"/>
    <property type="match status" value="1"/>
</dbReference>
<dbReference type="Gene3D" id="1.10.132.60">
    <property type="entry name" value="DNA polymerase family B, C-terminal domain"/>
    <property type="match status" value="1"/>
</dbReference>
<dbReference type="Gene3D" id="3.30.342.10">
    <property type="entry name" value="DNA Polymerase, chain B, domain 1"/>
    <property type="match status" value="1"/>
</dbReference>
<dbReference type="Gene3D" id="1.10.287.690">
    <property type="entry name" value="Helix hairpin bin"/>
    <property type="match status" value="1"/>
</dbReference>
<dbReference type="Gene3D" id="3.90.1600.10">
    <property type="entry name" value="Palm domain of DNA polymerase"/>
    <property type="match status" value="1"/>
</dbReference>
<dbReference type="Gene3D" id="3.30.420.10">
    <property type="entry name" value="Ribonuclease H-like superfamily/Ribonuclease H"/>
    <property type="match status" value="1"/>
</dbReference>
<dbReference type="InterPro" id="IPR006172">
    <property type="entry name" value="DNA-dir_DNA_pol_B"/>
</dbReference>
<dbReference type="InterPro" id="IPR017964">
    <property type="entry name" value="DNA-dir_DNA_pol_B_CS"/>
</dbReference>
<dbReference type="InterPro" id="IPR006133">
    <property type="entry name" value="DNA-dir_DNA_pol_B_exonuc"/>
</dbReference>
<dbReference type="InterPro" id="IPR006134">
    <property type="entry name" value="DNA-dir_DNA_pol_B_multi_dom"/>
</dbReference>
<dbReference type="InterPro" id="IPR043502">
    <property type="entry name" value="DNA/RNA_pol_sf"/>
</dbReference>
<dbReference type="InterPro" id="IPR042087">
    <property type="entry name" value="DNA_pol_B_thumb"/>
</dbReference>
<dbReference type="InterPro" id="IPR023211">
    <property type="entry name" value="DNA_pol_palm_dom_sf"/>
</dbReference>
<dbReference type="InterPro" id="IPR050240">
    <property type="entry name" value="DNA_pol_type-B"/>
</dbReference>
<dbReference type="InterPro" id="IPR021639">
    <property type="entry name" value="DNAPolymera_Pol_C"/>
</dbReference>
<dbReference type="InterPro" id="IPR012337">
    <property type="entry name" value="RNaseH-like_sf"/>
</dbReference>
<dbReference type="InterPro" id="IPR036397">
    <property type="entry name" value="RNaseH_sf"/>
</dbReference>
<dbReference type="PANTHER" id="PTHR10322">
    <property type="entry name" value="DNA POLYMERASE CATALYTIC SUBUNIT"/>
    <property type="match status" value="1"/>
</dbReference>
<dbReference type="PANTHER" id="PTHR10322:SF23">
    <property type="entry name" value="DNA POLYMERASE DELTA CATALYTIC SUBUNIT"/>
    <property type="match status" value="1"/>
</dbReference>
<dbReference type="Pfam" id="PF00136">
    <property type="entry name" value="DNA_pol_B"/>
    <property type="match status" value="1"/>
</dbReference>
<dbReference type="Pfam" id="PF03104">
    <property type="entry name" value="DNA_pol_B_exo1"/>
    <property type="match status" value="1"/>
</dbReference>
<dbReference type="Pfam" id="PF11590">
    <property type="entry name" value="DNAPolymera_Pol"/>
    <property type="match status" value="1"/>
</dbReference>
<dbReference type="PRINTS" id="PR00106">
    <property type="entry name" value="DNAPOLB"/>
</dbReference>
<dbReference type="SMART" id="SM00486">
    <property type="entry name" value="POLBc"/>
    <property type="match status" value="1"/>
</dbReference>
<dbReference type="SUPFAM" id="SSF56672">
    <property type="entry name" value="DNA/RNA polymerases"/>
    <property type="match status" value="1"/>
</dbReference>
<dbReference type="SUPFAM" id="SSF53098">
    <property type="entry name" value="Ribonuclease H-like"/>
    <property type="match status" value="1"/>
</dbReference>
<dbReference type="PROSITE" id="PS00116">
    <property type="entry name" value="DNA_POLYMERASE_B"/>
    <property type="match status" value="1"/>
</dbReference>
<sequence length="1240" mass="137328">MFCAAGGPASPGGKPAARAASGFFAPHNPRGATQTAPPPCRRQNFYNPHLAQTGTQPKALGPAQRHTYYSECDEFRFIAPRSLDEDAPAEQRTGVHDGRLRRAPKVYCGGDERDVLRVGPEGFWPRRLRLWGGADHAPEGFDPTVTVFHVYDILEHVEHAYSMRAAQLHERFMDAITPAGTVITLLGLTPEGHRVAVHVYGTRQYFYMNKAEVDRHLQCRAPRDLCERLAAALRESPGASFRGISADHFEAEVVERADVYYYETRPTLYYRVFVRSGRALAYLCDNFCPAIRKYEGGVDATTRFILDNPGFVTFGWYRLKPGRGNAPAQPRPPTAFGTSSDVEFNCTADNLAVEGAMCDLPAYKLMCFDIECKAGGEDELAFPVAERPEDLVIQISCLLYDLSTTALEHILLFSLGSCDLPESHLSDLASRGLPAPVVLEFDSEFEMLLAFMTFVKQYGPEFVTGYNIINFDWPFVLTKLTEIYKVPLDGYGRMNGRGVFRVWDIGQSHFQKRSKIKVNGMVNIDMYGIITDKVKLSSYKLNAVAEAVLKDKKKDLSYRDIPAYYASGPAQRGVIGEYCVQDSLLVGQLFFKFLPHLELSAVARLAGINITRTIYDGQQIRVFTCLLRLAGQKGFILPDTQGRFRGLDKEAPKRPAVPRGEGERPGDGNGDEDKDDDEDGDEDGDEREEVARETGGRHVGYQGARVLDPTSGFHVDPVVVFDFASLYPSIIQAHNLCFSTLSLRPEAVAHLEADRDYLEIEVGGRRLFFVKAHVRESLLSILLRDWLAMRKQIRSRIPQSTPEEAVLLDKQQAAIKVVCNSVYGFTGVQHGLLPCLHVAATVTTIGREMLLATRAYVHARWAEFDQLLADFPEAAGMRAPGPYSMRIIYGDTDSIFVLCRGLTAAGLVAMGDKMASHISRALFLPPIKLECEKTFTKLLLIAKKKYIGVICGGKMLIKGVDLVRKNNCAFINRTSRALVDLLFYDDTVSGAAAALAERPAEEWLARPLPEGLQAFGAVLVDAHRRITDPERDIQDFVLTAELSRHPRAYTNKRLAHLTVYYKLMARRAQVPSIKDRIPYVIVAQTREVEETVARLAALRELDAAAPGDEPAPPAALPSPAKRPRETPSHADPPGGASKPRKLLVSELAEDPGYAIARGVPLNTDYYFSHLLGAACVTFKALFGNNAKITESLLKRFIPETWHPPDDVAARLRAAGFGPAGAGATAEETRRMLHRAFDTLA</sequence>
<feature type="chain" id="PRO_0000385160" description="DNA polymerase catalytic subunit">
    <location>
        <begin position="1"/>
        <end position="1240"/>
    </location>
</feature>
<feature type="region of interest" description="Disordered" evidence="2">
    <location>
        <begin position="1"/>
        <end position="44"/>
    </location>
</feature>
<feature type="region of interest" description="Disordered" evidence="2">
    <location>
        <begin position="646"/>
        <end position="695"/>
    </location>
</feature>
<feature type="region of interest" description="Disordered" evidence="2">
    <location>
        <begin position="1103"/>
        <end position="1139"/>
    </location>
</feature>
<feature type="compositionally biased region" description="Low complexity" evidence="2">
    <location>
        <begin position="1"/>
        <end position="22"/>
    </location>
</feature>
<feature type="compositionally biased region" description="Acidic residues" evidence="2">
    <location>
        <begin position="669"/>
        <end position="688"/>
    </location>
</feature>
<accession>P89453</accession>
<reference key="1">
    <citation type="journal article" date="1998" name="J. Virol.">
        <title>The genome sequence of herpes simplex virus type 2.</title>
        <authorList>
            <person name="Dolan A."/>
            <person name="Jamieson F.E."/>
            <person name="Cunningham C."/>
            <person name="Barnett B.C."/>
            <person name="McGeoch D.J."/>
        </authorList>
    </citation>
    <scope>NUCLEOTIDE SEQUENCE [LARGE SCALE GENOMIC DNA]</scope>
</reference>
<evidence type="ECO:0000250" key="1"/>
<evidence type="ECO:0000256" key="2">
    <source>
        <dbReference type="SAM" id="MobiDB-lite"/>
    </source>
</evidence>
<evidence type="ECO:0000305" key="3"/>
<comment type="function">
    <text evidence="1">Replicates viral genomic DNA. The replication complex is composed of six viral proteins: the DNA polymerase, processivity factor, primase, primase-associated factor, helicase, and ssDNA-binding protein. Additionally, the polymerase contains an intrinsic ribonuclease H (RNase H) activity that specifically degrades RNA/DNA heteroduplexes or duplex DNA substrates in the 5' to 3' direction. Therefore, it can catalyze the excision of the RNA primers that initiate the synthesis of Okazaki fragments at a replication fork during viral DNA replication (By similarity).</text>
</comment>
<comment type="catalytic activity">
    <reaction>
        <text>DNA(n) + a 2'-deoxyribonucleoside 5'-triphosphate = DNA(n+1) + diphosphate</text>
        <dbReference type="Rhea" id="RHEA:22508"/>
        <dbReference type="Rhea" id="RHEA-COMP:17339"/>
        <dbReference type="Rhea" id="RHEA-COMP:17340"/>
        <dbReference type="ChEBI" id="CHEBI:33019"/>
        <dbReference type="ChEBI" id="CHEBI:61560"/>
        <dbReference type="ChEBI" id="CHEBI:173112"/>
        <dbReference type="EC" id="2.7.7.7"/>
    </reaction>
</comment>
<comment type="catalytic activity">
    <reaction>
        <text>Endonucleolytic cleavage to 5'-phosphomonoester.</text>
        <dbReference type="EC" id="3.1.26.4"/>
    </reaction>
</comment>
<comment type="subunit">
    <text evidence="1">Forms a complex with the ssDNA-binding protein UL29, the DNA polymerase processivity factor, and the alkaline exonuclease. Interacts with the putative helicase-primase complex subunit UL8; this interaction may coordinate leading and lagging strand DNA synthesis at the replication fork (By similarity).</text>
</comment>
<comment type="subcellular location">
    <subcellularLocation>
        <location evidence="1">Host nucleus</location>
    </subcellularLocation>
    <text evidence="1">the protein is present at discrete sites in nuclei, called replication compartments where viral DNA replication occurs.</text>
</comment>
<comment type="similarity">
    <text evidence="3">Belongs to the DNA polymerase type-B family.</text>
</comment>